<accession>P85128</accession>
<feature type="peptide" id="PRO_0000294957" description="Kalata-B10" evidence="2 3">
    <location>
        <begin position="1"/>
        <end position="30"/>
    </location>
</feature>
<feature type="disulfide bond" evidence="1 2">
    <location>
        <begin position="5"/>
        <end position="19"/>
    </location>
</feature>
<feature type="disulfide bond" evidence="1 2">
    <location>
        <begin position="9"/>
        <end position="21"/>
    </location>
</feature>
<feature type="disulfide bond" evidence="1 2">
    <location>
        <begin position="14"/>
        <end position="27"/>
    </location>
</feature>
<feature type="cross-link" description="Cyclopeptide (Gly-Asp)" evidence="3">
    <location>
        <begin position="1"/>
        <end position="30"/>
    </location>
</feature>
<sequence>GLPTCGETCFGGTCNTPGCSCSSWPICTRD</sequence>
<dbReference type="SMR" id="P85128"/>
<dbReference type="GO" id="GO:0006952">
    <property type="term" value="P:defense response"/>
    <property type="evidence" value="ECO:0007669"/>
    <property type="project" value="UniProtKB-KW"/>
</dbReference>
<dbReference type="InterPro" id="IPR005535">
    <property type="entry name" value="Cyclotide"/>
</dbReference>
<dbReference type="InterPro" id="IPR012324">
    <property type="entry name" value="Cyclotide_moebius_CS"/>
</dbReference>
<dbReference type="InterPro" id="IPR036146">
    <property type="entry name" value="Cyclotide_sf"/>
</dbReference>
<dbReference type="Pfam" id="PF03784">
    <property type="entry name" value="Cyclotide"/>
    <property type="match status" value="1"/>
</dbReference>
<dbReference type="PIRSF" id="PIRSF037891">
    <property type="entry name" value="Cycloviolacin"/>
    <property type="match status" value="1"/>
</dbReference>
<dbReference type="SUPFAM" id="SSF57038">
    <property type="entry name" value="Cyclotides"/>
    <property type="match status" value="1"/>
</dbReference>
<dbReference type="PROSITE" id="PS51052">
    <property type="entry name" value="CYCLOTIDE"/>
    <property type="match status" value="1"/>
</dbReference>
<dbReference type="PROSITE" id="PS60009">
    <property type="entry name" value="CYCLOTIDE_MOEBIUS"/>
    <property type="match status" value="1"/>
</dbReference>
<reference evidence="4" key="1">
    <citation type="journal article" date="2007" name="ChemBioChem">
        <title>The cyclotide fingerprint in Oldenlandia affinis: elucidation of chemically modified, linear and novel macrocyclic peptides.</title>
        <authorList>
            <person name="Plan M.R.R."/>
            <person name="Goeransson U."/>
            <person name="Clark R.J."/>
            <person name="Daly N.L."/>
            <person name="Colgrave M.L."/>
            <person name="Craik D.J."/>
        </authorList>
    </citation>
    <scope>PROTEIN SEQUENCE</scope>
    <scope>MASS SPECTROMETRY</scope>
    <scope>MODIFICATION AT TRP-24</scope>
</reference>
<proteinExistence type="evidence at protein level"/>
<comment type="function">
    <text evidence="4">Probably participates in a plant defense mechanism.</text>
</comment>
<comment type="domain">
    <text evidence="1">The presence of a 'disulfide through disulfide knot' structurally defines this protein as a knottin.</text>
</comment>
<comment type="PTM">
    <text evidence="3">This peptide occurs in both cyclic and linear forms. The linear form contains unmodified Trp-24, the cyclic peptide occurs in two forms with unmodified Trp-24, and with Trp-24 oxidized to form oxindolylalanine. Oxidation is enhanced by exposure to sunlight.</text>
</comment>
<comment type="mass spectrometry">
    <text>Cyclic form.</text>
</comment>
<comment type="mass spectrometry">
    <text>Linear form.</text>
</comment>
<comment type="mass spectrometry">
    <text>With oxindolylalanine.</text>
</comment>
<comment type="similarity">
    <text evidence="2">Belongs to the cyclotide family. Moebius subfamily.</text>
</comment>
<comment type="caution">
    <text evidence="5">The oxidation form of Trp-24 is subject of controversy and could be the artifactual result of sample handling.</text>
</comment>
<evidence type="ECO:0000250" key="1">
    <source>
        <dbReference type="UniProtKB" id="P83836"/>
    </source>
</evidence>
<evidence type="ECO:0000255" key="2">
    <source>
        <dbReference type="PROSITE-ProRule" id="PRU00395"/>
    </source>
</evidence>
<evidence type="ECO:0000269" key="3">
    <source>
    </source>
</evidence>
<evidence type="ECO:0000305" key="4"/>
<evidence type="ECO:0000305" key="5">
    <source>
    </source>
</evidence>
<protein>
    <recommendedName>
        <fullName>Kalata-B10</fullName>
    </recommendedName>
</protein>
<name>KAB10_OLDAF</name>
<keyword id="KW-0903">Direct protein sequencing</keyword>
<keyword id="KW-1015">Disulfide bond</keyword>
<keyword id="KW-0960">Knottin</keyword>
<keyword id="KW-0611">Plant defense</keyword>
<organism>
    <name type="scientific">Oldenlandia affinis</name>
    <dbReference type="NCBI Taxonomy" id="60225"/>
    <lineage>
        <taxon>Eukaryota</taxon>
        <taxon>Viridiplantae</taxon>
        <taxon>Streptophyta</taxon>
        <taxon>Embryophyta</taxon>
        <taxon>Tracheophyta</taxon>
        <taxon>Spermatophyta</taxon>
        <taxon>Magnoliopsida</taxon>
        <taxon>eudicotyledons</taxon>
        <taxon>Gunneridae</taxon>
        <taxon>Pentapetalae</taxon>
        <taxon>asterids</taxon>
        <taxon>lamiids</taxon>
        <taxon>Gentianales</taxon>
        <taxon>Rubiaceae</taxon>
        <taxon>Rubioideae</taxon>
        <taxon>Spermacoceae</taxon>
        <taxon>Hedyotis-Oldenlandia complex</taxon>
        <taxon>Oldenlandia</taxon>
    </lineage>
</organism>